<dbReference type="EC" id="3.2.2.23" evidence="2"/>
<dbReference type="EC" id="4.2.99.18" evidence="2"/>
<dbReference type="EMBL" id="CP000141">
    <property type="protein sequence ID" value="ABB15292.1"/>
    <property type="molecule type" value="Genomic_DNA"/>
</dbReference>
<dbReference type="RefSeq" id="WP_011344545.1">
    <property type="nucleotide sequence ID" value="NC_007503.1"/>
</dbReference>
<dbReference type="SMR" id="Q3ABL4"/>
<dbReference type="FunCoup" id="Q3ABL4">
    <property type="interactions" value="309"/>
</dbReference>
<dbReference type="STRING" id="246194.CHY_1649"/>
<dbReference type="KEGG" id="chy:CHY_1649"/>
<dbReference type="eggNOG" id="COG0266">
    <property type="taxonomic scope" value="Bacteria"/>
</dbReference>
<dbReference type="HOGENOM" id="CLU_038423_1_2_9"/>
<dbReference type="InParanoid" id="Q3ABL4"/>
<dbReference type="OrthoDB" id="9800855at2"/>
<dbReference type="Proteomes" id="UP000002706">
    <property type="component" value="Chromosome"/>
</dbReference>
<dbReference type="GO" id="GO:0034039">
    <property type="term" value="F:8-oxo-7,8-dihydroguanine DNA N-glycosylase activity"/>
    <property type="evidence" value="ECO:0007669"/>
    <property type="project" value="TreeGrafter"/>
</dbReference>
<dbReference type="GO" id="GO:0140078">
    <property type="term" value="F:class I DNA-(apurinic or apyrimidinic site) endonuclease activity"/>
    <property type="evidence" value="ECO:0007669"/>
    <property type="project" value="UniProtKB-EC"/>
</dbReference>
<dbReference type="GO" id="GO:0003684">
    <property type="term" value="F:damaged DNA binding"/>
    <property type="evidence" value="ECO:0007669"/>
    <property type="project" value="InterPro"/>
</dbReference>
<dbReference type="GO" id="GO:0008270">
    <property type="term" value="F:zinc ion binding"/>
    <property type="evidence" value="ECO:0007669"/>
    <property type="project" value="UniProtKB-UniRule"/>
</dbReference>
<dbReference type="GO" id="GO:0006284">
    <property type="term" value="P:base-excision repair"/>
    <property type="evidence" value="ECO:0007669"/>
    <property type="project" value="InterPro"/>
</dbReference>
<dbReference type="CDD" id="cd08966">
    <property type="entry name" value="EcFpg-like_N"/>
    <property type="match status" value="1"/>
</dbReference>
<dbReference type="FunFam" id="1.10.8.50:FF:000003">
    <property type="entry name" value="Formamidopyrimidine-DNA glycosylase"/>
    <property type="match status" value="1"/>
</dbReference>
<dbReference type="Gene3D" id="1.10.8.50">
    <property type="match status" value="1"/>
</dbReference>
<dbReference type="Gene3D" id="3.20.190.10">
    <property type="entry name" value="MutM-like, N-terminal"/>
    <property type="match status" value="1"/>
</dbReference>
<dbReference type="HAMAP" id="MF_00103">
    <property type="entry name" value="Fapy_DNA_glycosyl"/>
    <property type="match status" value="1"/>
</dbReference>
<dbReference type="InterPro" id="IPR015886">
    <property type="entry name" value="DNA_glyclase/AP_lyase_DNA-bd"/>
</dbReference>
<dbReference type="InterPro" id="IPR015887">
    <property type="entry name" value="DNA_glyclase_Znf_dom_DNA_BS"/>
</dbReference>
<dbReference type="InterPro" id="IPR020629">
    <property type="entry name" value="Formamido-pyr_DNA_Glyclase"/>
</dbReference>
<dbReference type="InterPro" id="IPR012319">
    <property type="entry name" value="FPG_cat"/>
</dbReference>
<dbReference type="InterPro" id="IPR035937">
    <property type="entry name" value="MutM-like_N-ter"/>
</dbReference>
<dbReference type="InterPro" id="IPR010979">
    <property type="entry name" value="Ribosomal_uS13-like_H2TH"/>
</dbReference>
<dbReference type="InterPro" id="IPR000214">
    <property type="entry name" value="Znf_DNA_glyclase/AP_lyase"/>
</dbReference>
<dbReference type="InterPro" id="IPR010663">
    <property type="entry name" value="Znf_FPG/IleRS"/>
</dbReference>
<dbReference type="NCBIfam" id="TIGR00577">
    <property type="entry name" value="fpg"/>
    <property type="match status" value="1"/>
</dbReference>
<dbReference type="NCBIfam" id="NF002211">
    <property type="entry name" value="PRK01103.1"/>
    <property type="match status" value="1"/>
</dbReference>
<dbReference type="PANTHER" id="PTHR22993">
    <property type="entry name" value="FORMAMIDOPYRIMIDINE-DNA GLYCOSYLASE"/>
    <property type="match status" value="1"/>
</dbReference>
<dbReference type="PANTHER" id="PTHR22993:SF9">
    <property type="entry name" value="FORMAMIDOPYRIMIDINE-DNA GLYCOSYLASE"/>
    <property type="match status" value="1"/>
</dbReference>
<dbReference type="Pfam" id="PF01149">
    <property type="entry name" value="Fapy_DNA_glyco"/>
    <property type="match status" value="1"/>
</dbReference>
<dbReference type="Pfam" id="PF06831">
    <property type="entry name" value="H2TH"/>
    <property type="match status" value="1"/>
</dbReference>
<dbReference type="Pfam" id="PF06827">
    <property type="entry name" value="zf-FPG_IleRS"/>
    <property type="match status" value="1"/>
</dbReference>
<dbReference type="SMART" id="SM00898">
    <property type="entry name" value="Fapy_DNA_glyco"/>
    <property type="match status" value="1"/>
</dbReference>
<dbReference type="SMART" id="SM01232">
    <property type="entry name" value="H2TH"/>
    <property type="match status" value="1"/>
</dbReference>
<dbReference type="SUPFAM" id="SSF57716">
    <property type="entry name" value="Glucocorticoid receptor-like (DNA-binding domain)"/>
    <property type="match status" value="1"/>
</dbReference>
<dbReference type="SUPFAM" id="SSF81624">
    <property type="entry name" value="N-terminal domain of MutM-like DNA repair proteins"/>
    <property type="match status" value="1"/>
</dbReference>
<dbReference type="SUPFAM" id="SSF46946">
    <property type="entry name" value="S13-like H2TH domain"/>
    <property type="match status" value="1"/>
</dbReference>
<dbReference type="PROSITE" id="PS51068">
    <property type="entry name" value="FPG_CAT"/>
    <property type="match status" value="1"/>
</dbReference>
<dbReference type="PROSITE" id="PS01242">
    <property type="entry name" value="ZF_FPG_1"/>
    <property type="match status" value="1"/>
</dbReference>
<dbReference type="PROSITE" id="PS51066">
    <property type="entry name" value="ZF_FPG_2"/>
    <property type="match status" value="1"/>
</dbReference>
<sequence>MPELPEVETIKRTLAPKILGKTIYRVEVYLPKIIKNVSVEEFTRRVVGKEIVALKRRGKYLLIDLSGKETVTVHLRMTGKLLILPKGSPKDKHTHAIFDLGDLELHFNDIRQFGGFSFEMPEIGPEPLEDEFTPEYLKTKLKASQKNLKAVLLDQKIIAGIGNIYADEILFEAGLSPKRIAASLSEDEAEELFKAIRKILALGIEYRGTSIRDYVDAENQQGSFQRLLKVYGKNGSLCVRCNNVLIRERHAGRSTHYCPHCQK</sequence>
<protein>
    <recommendedName>
        <fullName evidence="2">Formamidopyrimidine-DNA glycosylase</fullName>
        <shortName evidence="2">Fapy-DNA glycosylase</shortName>
        <ecNumber evidence="2">3.2.2.23</ecNumber>
    </recommendedName>
    <alternativeName>
        <fullName evidence="2">DNA-(apurinic or apyrimidinic site) lyase MutM</fullName>
        <shortName evidence="2">AP lyase MutM</shortName>
        <ecNumber evidence="2">4.2.99.18</ecNumber>
    </alternativeName>
</protein>
<gene>
    <name evidence="2" type="primary">mutM</name>
    <name evidence="2" type="synonym">fpg</name>
    <name type="ordered locus">CHY_1649</name>
</gene>
<reference key="1">
    <citation type="journal article" date="2005" name="PLoS Genet.">
        <title>Life in hot carbon monoxide: the complete genome sequence of Carboxydothermus hydrogenoformans Z-2901.</title>
        <authorList>
            <person name="Wu M."/>
            <person name="Ren Q."/>
            <person name="Durkin A.S."/>
            <person name="Daugherty S.C."/>
            <person name="Brinkac L.M."/>
            <person name="Dodson R.J."/>
            <person name="Madupu R."/>
            <person name="Sullivan S.A."/>
            <person name="Kolonay J.F."/>
            <person name="Nelson W.C."/>
            <person name="Tallon L.J."/>
            <person name="Jones K.M."/>
            <person name="Ulrich L.E."/>
            <person name="Gonzalez J.M."/>
            <person name="Zhulin I.B."/>
            <person name="Robb F.T."/>
            <person name="Eisen J.A."/>
        </authorList>
    </citation>
    <scope>NUCLEOTIDE SEQUENCE [LARGE SCALE GENOMIC DNA]</scope>
    <source>
        <strain>ATCC BAA-161 / DSM 6008 / Z-2901</strain>
    </source>
</reference>
<comment type="function">
    <text evidence="2">Involved in base excision repair of DNA damaged by oxidation or by mutagenic agents. Acts as a DNA glycosylase that recognizes and removes damaged bases. Has a preference for oxidized purines, such as 7,8-dihydro-8-oxoguanine (8-oxoG). Has AP (apurinic/apyrimidinic) lyase activity and introduces nicks in the DNA strand. Cleaves the DNA backbone by beta-delta elimination to generate a single-strand break at the site of the removed base with both 3'- and 5'-phosphates.</text>
</comment>
<comment type="catalytic activity">
    <reaction evidence="2">
        <text>Hydrolysis of DNA containing ring-opened 7-methylguanine residues, releasing 2,6-diamino-4-hydroxy-5-(N-methyl)formamidopyrimidine.</text>
        <dbReference type="EC" id="3.2.2.23"/>
    </reaction>
</comment>
<comment type="catalytic activity">
    <reaction evidence="2">
        <text>2'-deoxyribonucleotide-(2'-deoxyribose 5'-phosphate)-2'-deoxyribonucleotide-DNA = a 3'-end 2'-deoxyribonucleotide-(2,3-dehydro-2,3-deoxyribose 5'-phosphate)-DNA + a 5'-end 5'-phospho-2'-deoxyribonucleoside-DNA + H(+)</text>
        <dbReference type="Rhea" id="RHEA:66592"/>
        <dbReference type="Rhea" id="RHEA-COMP:13180"/>
        <dbReference type="Rhea" id="RHEA-COMP:16897"/>
        <dbReference type="Rhea" id="RHEA-COMP:17067"/>
        <dbReference type="ChEBI" id="CHEBI:15378"/>
        <dbReference type="ChEBI" id="CHEBI:136412"/>
        <dbReference type="ChEBI" id="CHEBI:157695"/>
        <dbReference type="ChEBI" id="CHEBI:167181"/>
        <dbReference type="EC" id="4.2.99.18"/>
    </reaction>
</comment>
<comment type="cofactor">
    <cofactor evidence="2">
        <name>Zn(2+)</name>
        <dbReference type="ChEBI" id="CHEBI:29105"/>
    </cofactor>
    <text evidence="2">Binds 1 zinc ion per subunit.</text>
</comment>
<comment type="subunit">
    <text evidence="2">Monomer.</text>
</comment>
<comment type="similarity">
    <text evidence="2">Belongs to the FPG family.</text>
</comment>
<evidence type="ECO:0000250" key="1"/>
<evidence type="ECO:0000255" key="2">
    <source>
        <dbReference type="HAMAP-Rule" id="MF_00103"/>
    </source>
</evidence>
<name>FPG_CARHZ</name>
<keyword id="KW-0227">DNA damage</keyword>
<keyword id="KW-0234">DNA repair</keyword>
<keyword id="KW-0238">DNA-binding</keyword>
<keyword id="KW-0326">Glycosidase</keyword>
<keyword id="KW-0378">Hydrolase</keyword>
<keyword id="KW-0456">Lyase</keyword>
<keyword id="KW-0479">Metal-binding</keyword>
<keyword id="KW-0511">Multifunctional enzyme</keyword>
<keyword id="KW-1185">Reference proteome</keyword>
<keyword id="KW-0862">Zinc</keyword>
<keyword id="KW-0863">Zinc-finger</keyword>
<feature type="initiator methionine" description="Removed" evidence="1">
    <location>
        <position position="1"/>
    </location>
</feature>
<feature type="chain" id="PRO_0000228425" description="Formamidopyrimidine-DNA glycosylase">
    <location>
        <begin position="2"/>
        <end position="263"/>
    </location>
</feature>
<feature type="zinc finger region" description="FPG-type" evidence="2">
    <location>
        <begin position="229"/>
        <end position="263"/>
    </location>
</feature>
<feature type="active site" description="Schiff-base intermediate with DNA" evidence="2">
    <location>
        <position position="2"/>
    </location>
</feature>
<feature type="active site" description="Proton donor" evidence="2">
    <location>
        <position position="3"/>
    </location>
</feature>
<feature type="active site" description="Proton donor; for beta-elimination activity" evidence="2">
    <location>
        <position position="59"/>
    </location>
</feature>
<feature type="active site" description="Proton donor; for delta-elimination activity" evidence="2">
    <location>
        <position position="253"/>
    </location>
</feature>
<feature type="binding site" evidence="2">
    <location>
        <position position="93"/>
    </location>
    <ligand>
        <name>DNA</name>
        <dbReference type="ChEBI" id="CHEBI:16991"/>
    </ligand>
</feature>
<feature type="binding site" evidence="2">
    <location>
        <position position="111"/>
    </location>
    <ligand>
        <name>DNA</name>
        <dbReference type="ChEBI" id="CHEBI:16991"/>
    </ligand>
</feature>
<accession>Q3ABL4</accession>
<organism>
    <name type="scientific">Carboxydothermus hydrogenoformans (strain ATCC BAA-161 / DSM 6008 / Z-2901)</name>
    <dbReference type="NCBI Taxonomy" id="246194"/>
    <lineage>
        <taxon>Bacteria</taxon>
        <taxon>Bacillati</taxon>
        <taxon>Bacillota</taxon>
        <taxon>Clostridia</taxon>
        <taxon>Thermoanaerobacterales</taxon>
        <taxon>Thermoanaerobacteraceae</taxon>
        <taxon>Carboxydothermus</taxon>
    </lineage>
</organism>
<proteinExistence type="inferred from homology"/>